<name>YP021_HUMAN</name>
<keyword id="KW-1185">Reference proteome</keyword>
<accession>Q8N6K4</accession>
<accession>B2R6Y3</accession>
<sequence length="173" mass="17423">MGDLPWAPPEAQAPSTAGAGDVAEHQVAPARFLQGAWRQAAGWLCRETGAAPGSAQAGPPETAHAADPQPRGPQAPPRLPPSLSPERVHPGQPAAPAEPAPGAPALRSGPSQPRGLRLPVPVPACAGSSAPGSPAALPDSYPWPPPARNRPATLPPTSRVSPLAAFLASAPQR</sequence>
<protein>
    <recommendedName>
        <fullName>Putative uncharacterized protein MGC34800</fullName>
    </recommendedName>
</protein>
<dbReference type="EMBL" id="AK312764">
    <property type="protein sequence ID" value="BAG35630.1"/>
    <property type="molecule type" value="mRNA"/>
</dbReference>
<dbReference type="EMBL" id="CH471189">
    <property type="protein sequence ID" value="EAW54757.1"/>
    <property type="molecule type" value="Genomic_DNA"/>
</dbReference>
<dbReference type="EMBL" id="BC029861">
    <property type="protein sequence ID" value="AAH29861.1"/>
    <property type="molecule type" value="mRNA"/>
</dbReference>
<dbReference type="RefSeq" id="XP_016879449.1">
    <property type="nucleotide sequence ID" value="XM_017023960.1"/>
</dbReference>
<dbReference type="BioMuta" id="-"/>
<dbReference type="DMDM" id="74729140"/>
<dbReference type="GeneID" id="124903767"/>
<dbReference type="KEGG" id="hsa:124903767"/>
<dbReference type="neXtProt" id="NX_Q8N6K4"/>
<dbReference type="InParanoid" id="Q8N6K4"/>
<dbReference type="PAN-GO" id="Q8N6K4">
    <property type="GO annotations" value="0 GO annotations based on evolutionary models"/>
</dbReference>
<dbReference type="PathwayCommons" id="Q8N6K4"/>
<dbReference type="BioGRID-ORCS" id="107987235">
    <property type="hits" value="0 hits in 1 CRISPR screen"/>
</dbReference>
<dbReference type="Pharos" id="Q8N6K4">
    <property type="development level" value="Tdark"/>
</dbReference>
<dbReference type="PRO" id="PR:Q8N6K4"/>
<dbReference type="Proteomes" id="UP000005640">
    <property type="component" value="Unplaced"/>
</dbReference>
<dbReference type="RNAct" id="Q8N6K4">
    <property type="molecule type" value="protein"/>
</dbReference>
<evidence type="ECO:0000256" key="1">
    <source>
        <dbReference type="SAM" id="MobiDB-lite"/>
    </source>
</evidence>
<proteinExistence type="evidence at transcript level"/>
<reference key="1">
    <citation type="journal article" date="2004" name="Nat. Genet.">
        <title>Complete sequencing and characterization of 21,243 full-length human cDNAs.</title>
        <authorList>
            <person name="Ota T."/>
            <person name="Suzuki Y."/>
            <person name="Nishikawa T."/>
            <person name="Otsuki T."/>
            <person name="Sugiyama T."/>
            <person name="Irie R."/>
            <person name="Wakamatsu A."/>
            <person name="Hayashi K."/>
            <person name="Sato H."/>
            <person name="Nagai K."/>
            <person name="Kimura K."/>
            <person name="Makita H."/>
            <person name="Sekine M."/>
            <person name="Obayashi M."/>
            <person name="Nishi T."/>
            <person name="Shibahara T."/>
            <person name="Tanaka T."/>
            <person name="Ishii S."/>
            <person name="Yamamoto J."/>
            <person name="Saito K."/>
            <person name="Kawai Y."/>
            <person name="Isono Y."/>
            <person name="Nakamura Y."/>
            <person name="Nagahari K."/>
            <person name="Murakami K."/>
            <person name="Yasuda T."/>
            <person name="Iwayanagi T."/>
            <person name="Wagatsuma M."/>
            <person name="Shiratori A."/>
            <person name="Sudo H."/>
            <person name="Hosoiri T."/>
            <person name="Kaku Y."/>
            <person name="Kodaira H."/>
            <person name="Kondo H."/>
            <person name="Sugawara M."/>
            <person name="Takahashi M."/>
            <person name="Kanda K."/>
            <person name="Yokoi T."/>
            <person name="Furuya T."/>
            <person name="Kikkawa E."/>
            <person name="Omura Y."/>
            <person name="Abe K."/>
            <person name="Kamihara K."/>
            <person name="Katsuta N."/>
            <person name="Sato K."/>
            <person name="Tanikawa M."/>
            <person name="Yamazaki M."/>
            <person name="Ninomiya K."/>
            <person name="Ishibashi T."/>
            <person name="Yamashita H."/>
            <person name="Murakawa K."/>
            <person name="Fujimori K."/>
            <person name="Tanai H."/>
            <person name="Kimata M."/>
            <person name="Watanabe M."/>
            <person name="Hiraoka S."/>
            <person name="Chiba Y."/>
            <person name="Ishida S."/>
            <person name="Ono Y."/>
            <person name="Takiguchi S."/>
            <person name="Watanabe S."/>
            <person name="Yosida M."/>
            <person name="Hotuta T."/>
            <person name="Kusano J."/>
            <person name="Kanehori K."/>
            <person name="Takahashi-Fujii A."/>
            <person name="Hara H."/>
            <person name="Tanase T.-O."/>
            <person name="Nomura Y."/>
            <person name="Togiya S."/>
            <person name="Komai F."/>
            <person name="Hara R."/>
            <person name="Takeuchi K."/>
            <person name="Arita M."/>
            <person name="Imose N."/>
            <person name="Musashino K."/>
            <person name="Yuuki H."/>
            <person name="Oshima A."/>
            <person name="Sasaki N."/>
            <person name="Aotsuka S."/>
            <person name="Yoshikawa Y."/>
            <person name="Matsunawa H."/>
            <person name="Ichihara T."/>
            <person name="Shiohata N."/>
            <person name="Sano S."/>
            <person name="Moriya S."/>
            <person name="Momiyama H."/>
            <person name="Satoh N."/>
            <person name="Takami S."/>
            <person name="Terashima Y."/>
            <person name="Suzuki O."/>
            <person name="Nakagawa S."/>
            <person name="Senoh A."/>
            <person name="Mizoguchi H."/>
            <person name="Goto Y."/>
            <person name="Shimizu F."/>
            <person name="Wakebe H."/>
            <person name="Hishigaki H."/>
            <person name="Watanabe T."/>
            <person name="Sugiyama A."/>
            <person name="Takemoto M."/>
            <person name="Kawakami B."/>
            <person name="Yamazaki M."/>
            <person name="Watanabe K."/>
            <person name="Kumagai A."/>
            <person name="Itakura S."/>
            <person name="Fukuzumi Y."/>
            <person name="Fujimori Y."/>
            <person name="Komiyama M."/>
            <person name="Tashiro H."/>
            <person name="Tanigami A."/>
            <person name="Fujiwara T."/>
            <person name="Ono T."/>
            <person name="Yamada K."/>
            <person name="Fujii Y."/>
            <person name="Ozaki K."/>
            <person name="Hirao M."/>
            <person name="Ohmori Y."/>
            <person name="Kawabata A."/>
            <person name="Hikiji T."/>
            <person name="Kobatake N."/>
            <person name="Inagaki H."/>
            <person name="Ikema Y."/>
            <person name="Okamoto S."/>
            <person name="Okitani R."/>
            <person name="Kawakami T."/>
            <person name="Noguchi S."/>
            <person name="Itoh T."/>
            <person name="Shigeta K."/>
            <person name="Senba T."/>
            <person name="Matsumura K."/>
            <person name="Nakajima Y."/>
            <person name="Mizuno T."/>
            <person name="Morinaga M."/>
            <person name="Sasaki M."/>
            <person name="Togashi T."/>
            <person name="Oyama M."/>
            <person name="Hata H."/>
            <person name="Watanabe M."/>
            <person name="Komatsu T."/>
            <person name="Mizushima-Sugano J."/>
            <person name="Satoh T."/>
            <person name="Shirai Y."/>
            <person name="Takahashi Y."/>
            <person name="Nakagawa K."/>
            <person name="Okumura K."/>
            <person name="Nagase T."/>
            <person name="Nomura N."/>
            <person name="Kikuchi H."/>
            <person name="Masuho Y."/>
            <person name="Yamashita R."/>
            <person name="Nakai K."/>
            <person name="Yada T."/>
            <person name="Nakamura Y."/>
            <person name="Ohara O."/>
            <person name="Isogai T."/>
            <person name="Sugano S."/>
        </authorList>
    </citation>
    <scope>NUCLEOTIDE SEQUENCE [LARGE SCALE MRNA]</scope>
    <source>
        <tissue>Esophagus</tissue>
    </source>
</reference>
<reference key="2">
    <citation type="submission" date="2005-07" db="EMBL/GenBank/DDBJ databases">
        <authorList>
            <person name="Mural R.J."/>
            <person name="Istrail S."/>
            <person name="Sutton G.G."/>
            <person name="Florea L."/>
            <person name="Halpern A.L."/>
            <person name="Mobarry C.M."/>
            <person name="Lippert R."/>
            <person name="Walenz B."/>
            <person name="Shatkay H."/>
            <person name="Dew I."/>
            <person name="Miller J.R."/>
            <person name="Flanigan M.J."/>
            <person name="Edwards N.J."/>
            <person name="Bolanos R."/>
            <person name="Fasulo D."/>
            <person name="Halldorsson B.V."/>
            <person name="Hannenhalli S."/>
            <person name="Turner R."/>
            <person name="Yooseph S."/>
            <person name="Lu F."/>
            <person name="Nusskern D.R."/>
            <person name="Shue B.C."/>
            <person name="Zheng X.H."/>
            <person name="Zhong F."/>
            <person name="Delcher A.L."/>
            <person name="Huson D.H."/>
            <person name="Kravitz S.A."/>
            <person name="Mouchard L."/>
            <person name="Reinert K."/>
            <person name="Remington K.A."/>
            <person name="Clark A.G."/>
            <person name="Waterman M.S."/>
            <person name="Eichler E.E."/>
            <person name="Adams M.D."/>
            <person name="Hunkapiller M.W."/>
            <person name="Myers E.W."/>
            <person name="Venter J.C."/>
        </authorList>
    </citation>
    <scope>NUCLEOTIDE SEQUENCE [LARGE SCALE GENOMIC DNA]</scope>
</reference>
<reference key="3">
    <citation type="journal article" date="2004" name="Genome Res.">
        <title>The status, quality, and expansion of the NIH full-length cDNA project: the Mammalian Gene Collection (MGC).</title>
        <authorList>
            <consortium name="The MGC Project Team"/>
        </authorList>
    </citation>
    <scope>NUCLEOTIDE SEQUENCE [LARGE SCALE MRNA]</scope>
    <source>
        <tissue>Brain</tissue>
    </source>
</reference>
<feature type="chain" id="PRO_0000329444" description="Putative uncharacterized protein MGC34800">
    <location>
        <begin position="1"/>
        <end position="173"/>
    </location>
</feature>
<feature type="region of interest" description="Disordered" evidence="1">
    <location>
        <begin position="1"/>
        <end position="23"/>
    </location>
</feature>
<feature type="region of interest" description="Disordered" evidence="1">
    <location>
        <begin position="48"/>
        <end position="173"/>
    </location>
</feature>
<feature type="compositionally biased region" description="Low complexity" evidence="1">
    <location>
        <begin position="49"/>
        <end position="60"/>
    </location>
</feature>
<feature type="compositionally biased region" description="Pro residues" evidence="1">
    <location>
        <begin position="70"/>
        <end position="83"/>
    </location>
</feature>
<feature type="compositionally biased region" description="Low complexity" evidence="1">
    <location>
        <begin position="123"/>
        <end position="136"/>
    </location>
</feature>
<organism>
    <name type="scientific">Homo sapiens</name>
    <name type="common">Human</name>
    <dbReference type="NCBI Taxonomy" id="9606"/>
    <lineage>
        <taxon>Eukaryota</taxon>
        <taxon>Metazoa</taxon>
        <taxon>Chordata</taxon>
        <taxon>Craniata</taxon>
        <taxon>Vertebrata</taxon>
        <taxon>Euteleostomi</taxon>
        <taxon>Mammalia</taxon>
        <taxon>Eutheria</taxon>
        <taxon>Euarchontoglires</taxon>
        <taxon>Primates</taxon>
        <taxon>Haplorrhini</taxon>
        <taxon>Catarrhini</taxon>
        <taxon>Hominidae</taxon>
        <taxon>Homo</taxon>
    </lineage>
</organism>